<protein>
    <recommendedName>
        <fullName>Hsc70-interacting protein</fullName>
        <shortName>Hip</shortName>
    </recommendedName>
    <alternativeName>
        <fullName>Aging-associated protein 2</fullName>
    </alternativeName>
    <alternativeName>
        <fullName>Progesterone receptor-associated p48 protein</fullName>
    </alternativeName>
    <alternativeName>
        <fullName>Protein FAM10A1</fullName>
    </alternativeName>
    <alternativeName>
        <fullName>Putative tumor suppressor ST13</fullName>
    </alternativeName>
    <alternativeName>
        <fullName>Renal carcinoma antigen NY-REN-33</fullName>
    </alternativeName>
    <alternativeName>
        <fullName>Suppression of tumorigenicity 13 protein</fullName>
    </alternativeName>
</protein>
<gene>
    <name type="primary">ST13</name>
    <name type="synonym">AAG2</name>
    <name type="synonym">FAM10A1</name>
    <name type="synonym">HIP</name>
    <name type="synonym">SNC6</name>
</gene>
<name>F10A1_HUMAN</name>
<dbReference type="EMBL" id="U28918">
    <property type="protein sequence ID" value="AAB38382.1"/>
    <property type="molecule type" value="mRNA"/>
</dbReference>
<dbReference type="EMBL" id="U17714">
    <property type="protein sequence ID" value="AAC97526.1"/>
    <property type="molecule type" value="mRNA"/>
</dbReference>
<dbReference type="EMBL" id="AY513286">
    <property type="protein sequence ID" value="AAT08039.1"/>
    <property type="molecule type" value="mRNA"/>
</dbReference>
<dbReference type="EMBL" id="CR456586">
    <property type="protein sequence ID" value="CAG30472.1"/>
    <property type="molecule type" value="mRNA"/>
</dbReference>
<dbReference type="EMBL" id="Z98048">
    <property type="status" value="NOT_ANNOTATED_CDS"/>
    <property type="molecule type" value="Genomic_DNA"/>
</dbReference>
<dbReference type="EMBL" id="CH471095">
    <property type="protein sequence ID" value="EAW60394.1"/>
    <property type="molecule type" value="Genomic_DNA"/>
</dbReference>
<dbReference type="EMBL" id="BC052982">
    <property type="protein sequence ID" value="AAH52982.1"/>
    <property type="molecule type" value="mRNA"/>
</dbReference>
<dbReference type="EMBL" id="BC071629">
    <property type="protein sequence ID" value="AAH71629.1"/>
    <property type="molecule type" value="mRNA"/>
</dbReference>
<dbReference type="EMBL" id="BC139724">
    <property type="protein sequence ID" value="AAI39725.1"/>
    <property type="molecule type" value="mRNA"/>
</dbReference>
<dbReference type="CCDS" id="CCDS14006.1"/>
<dbReference type="RefSeq" id="NP_003923.2">
    <property type="nucleotide sequence ID" value="NM_003932.4"/>
</dbReference>
<dbReference type="SMR" id="P50502"/>
<dbReference type="BioGRID" id="112644">
    <property type="interactions" value="201"/>
</dbReference>
<dbReference type="CORUM" id="P50502"/>
<dbReference type="FunCoup" id="P50502">
    <property type="interactions" value="2383"/>
</dbReference>
<dbReference type="IntAct" id="P50502">
    <property type="interactions" value="55"/>
</dbReference>
<dbReference type="MINT" id="P50502"/>
<dbReference type="STRING" id="9606.ENSP00000216218"/>
<dbReference type="GlyGen" id="P50502">
    <property type="glycosylation" value="3 sites, 1 O-linked glycan (3 sites)"/>
</dbReference>
<dbReference type="iPTMnet" id="P50502"/>
<dbReference type="MetOSite" id="P50502"/>
<dbReference type="PhosphoSitePlus" id="P50502"/>
<dbReference type="SwissPalm" id="P50502"/>
<dbReference type="BioMuta" id="ST13"/>
<dbReference type="DMDM" id="6686278"/>
<dbReference type="OGP" id="P50502"/>
<dbReference type="REPRODUCTION-2DPAGE" id="IPI00032826"/>
<dbReference type="jPOST" id="P50502"/>
<dbReference type="MassIVE" id="P50502"/>
<dbReference type="PaxDb" id="9606-ENSP00000216218"/>
<dbReference type="PeptideAtlas" id="P50502"/>
<dbReference type="ProteomicsDB" id="56234"/>
<dbReference type="Pumba" id="P50502"/>
<dbReference type="Antibodypedia" id="3378">
    <property type="antibodies" value="391 antibodies from 34 providers"/>
</dbReference>
<dbReference type="DNASU" id="6767"/>
<dbReference type="Ensembl" id="ENST00000216218.8">
    <property type="protein sequence ID" value="ENSP00000216218.3"/>
    <property type="gene ID" value="ENSG00000100380.15"/>
</dbReference>
<dbReference type="GeneID" id="6767"/>
<dbReference type="KEGG" id="hsa:6767"/>
<dbReference type="MANE-Select" id="ENST00000216218.8">
    <property type="protein sequence ID" value="ENSP00000216218.3"/>
    <property type="RefSeq nucleotide sequence ID" value="NM_003932.5"/>
    <property type="RefSeq protein sequence ID" value="NP_003923.2"/>
</dbReference>
<dbReference type="UCSC" id="uc003aze.5">
    <property type="organism name" value="human"/>
</dbReference>
<dbReference type="AGR" id="HGNC:11343"/>
<dbReference type="CTD" id="6767"/>
<dbReference type="DisGeNET" id="6767"/>
<dbReference type="GeneCards" id="ST13"/>
<dbReference type="HGNC" id="HGNC:11343">
    <property type="gene designation" value="ST13"/>
</dbReference>
<dbReference type="HPA" id="ENSG00000100380">
    <property type="expression patterns" value="Low tissue specificity"/>
</dbReference>
<dbReference type="MIM" id="606796">
    <property type="type" value="gene"/>
</dbReference>
<dbReference type="neXtProt" id="NX_P50502"/>
<dbReference type="OpenTargets" id="ENSG00000100380"/>
<dbReference type="PharmGKB" id="PA36167"/>
<dbReference type="VEuPathDB" id="HostDB:ENSG00000100380"/>
<dbReference type="eggNOG" id="KOG1308">
    <property type="taxonomic scope" value="Eukaryota"/>
</dbReference>
<dbReference type="GeneTree" id="ENSGT00390000001347"/>
<dbReference type="InParanoid" id="P50502"/>
<dbReference type="OMA" id="YEKRRYK"/>
<dbReference type="OrthoDB" id="533763at2759"/>
<dbReference type="PAN-GO" id="P50502">
    <property type="GO annotations" value="2 GO annotations based on evolutionary models"/>
</dbReference>
<dbReference type="PhylomeDB" id="P50502"/>
<dbReference type="TreeFam" id="TF313244"/>
<dbReference type="PathwayCommons" id="P50502"/>
<dbReference type="Reactome" id="R-HSA-3371453">
    <property type="pathway name" value="Regulation of HSF1-mediated heat shock response"/>
</dbReference>
<dbReference type="SignaLink" id="P50502"/>
<dbReference type="SIGNOR" id="P50502"/>
<dbReference type="BioGRID-ORCS" id="6767">
    <property type="hits" value="37 hits in 1110 CRISPR screens"/>
</dbReference>
<dbReference type="ChiTaRS" id="ST13">
    <property type="organism name" value="human"/>
</dbReference>
<dbReference type="GeneWiki" id="ST13"/>
<dbReference type="GenomeRNAi" id="6767"/>
<dbReference type="Pharos" id="P50502">
    <property type="development level" value="Tbio"/>
</dbReference>
<dbReference type="PRO" id="PR:P50502"/>
<dbReference type="Proteomes" id="UP000005640">
    <property type="component" value="Chromosome 22"/>
</dbReference>
<dbReference type="RNAct" id="P50502">
    <property type="molecule type" value="protein"/>
</dbReference>
<dbReference type="Bgee" id="ENSG00000100380">
    <property type="expression patterns" value="Expressed in left ovary and 210 other cell types or tissues"/>
</dbReference>
<dbReference type="ExpressionAtlas" id="P50502">
    <property type="expression patterns" value="baseline and differential"/>
</dbReference>
<dbReference type="GO" id="GO:0005737">
    <property type="term" value="C:cytoplasm"/>
    <property type="evidence" value="ECO:0000304"/>
    <property type="project" value="ProtInc"/>
</dbReference>
<dbReference type="GO" id="GO:0005829">
    <property type="term" value="C:cytosol"/>
    <property type="evidence" value="ECO:0000314"/>
    <property type="project" value="HPA"/>
</dbReference>
<dbReference type="GO" id="GO:0070062">
    <property type="term" value="C:extracellular exosome"/>
    <property type="evidence" value="ECO:0007005"/>
    <property type="project" value="UniProtKB"/>
</dbReference>
<dbReference type="GO" id="GO:0030544">
    <property type="term" value="F:Hsp70 protein binding"/>
    <property type="evidence" value="ECO:0000318"/>
    <property type="project" value="GO_Central"/>
</dbReference>
<dbReference type="GO" id="GO:0046983">
    <property type="term" value="F:protein dimerization activity"/>
    <property type="evidence" value="ECO:0007669"/>
    <property type="project" value="InterPro"/>
</dbReference>
<dbReference type="GO" id="GO:0030674">
    <property type="term" value="F:protein-macromolecule adaptor activity"/>
    <property type="evidence" value="ECO:0000304"/>
    <property type="project" value="ProtInc"/>
</dbReference>
<dbReference type="GO" id="GO:0051085">
    <property type="term" value="P:chaperone cofactor-dependent protein refolding"/>
    <property type="evidence" value="ECO:0000318"/>
    <property type="project" value="GO_Central"/>
</dbReference>
<dbReference type="GO" id="GO:0006457">
    <property type="term" value="P:protein folding"/>
    <property type="evidence" value="ECO:0000304"/>
    <property type="project" value="ProtInc"/>
</dbReference>
<dbReference type="GO" id="GO:0009617">
    <property type="term" value="P:response to bacterium"/>
    <property type="evidence" value="ECO:0007669"/>
    <property type="project" value="Ensembl"/>
</dbReference>
<dbReference type="CDD" id="cd14438">
    <property type="entry name" value="Hip_N"/>
    <property type="match status" value="1"/>
</dbReference>
<dbReference type="FunFam" id="1.10.260.100:FF:000007">
    <property type="entry name" value="hsc70-interacting protein-like isoform X1"/>
    <property type="match status" value="1"/>
</dbReference>
<dbReference type="FunFam" id="1.25.40.10:FF:000080">
    <property type="entry name" value="hsc70-interacting protein-like isoform X1"/>
    <property type="match status" value="1"/>
</dbReference>
<dbReference type="FunFam" id="6.10.250.3420:FF:000001">
    <property type="entry name" value="Hsc70-interacting protein-like protein"/>
    <property type="match status" value="1"/>
</dbReference>
<dbReference type="Gene3D" id="1.10.260.100">
    <property type="match status" value="1"/>
</dbReference>
<dbReference type="Gene3D" id="6.10.250.3420">
    <property type="match status" value="1"/>
</dbReference>
<dbReference type="Gene3D" id="1.25.40.10">
    <property type="entry name" value="Tetratricopeptide repeat domain"/>
    <property type="match status" value="1"/>
</dbReference>
<dbReference type="InterPro" id="IPR034649">
    <property type="entry name" value="Hip_N"/>
</dbReference>
<dbReference type="InterPro" id="IPR041243">
    <property type="entry name" value="STI1/HOP_DP"/>
</dbReference>
<dbReference type="InterPro" id="IPR006636">
    <property type="entry name" value="STI1_HS-bd"/>
</dbReference>
<dbReference type="InterPro" id="IPR011990">
    <property type="entry name" value="TPR-like_helical_dom_sf"/>
</dbReference>
<dbReference type="InterPro" id="IPR019734">
    <property type="entry name" value="TPR_rpt"/>
</dbReference>
<dbReference type="PANTHER" id="PTHR45883">
    <property type="entry name" value="HSC70-INTERACTING PROTEIN"/>
    <property type="match status" value="1"/>
</dbReference>
<dbReference type="PANTHER" id="PTHR45883:SF2">
    <property type="entry name" value="HSC70-INTERACTING PROTEIN"/>
    <property type="match status" value="1"/>
</dbReference>
<dbReference type="Pfam" id="PF18253">
    <property type="entry name" value="HipN"/>
    <property type="match status" value="1"/>
</dbReference>
<dbReference type="Pfam" id="PF17830">
    <property type="entry name" value="STI1-HOP_DP"/>
    <property type="match status" value="1"/>
</dbReference>
<dbReference type="Pfam" id="PF13181">
    <property type="entry name" value="TPR_8"/>
    <property type="match status" value="1"/>
</dbReference>
<dbReference type="SMART" id="SM00727">
    <property type="entry name" value="STI1"/>
    <property type="match status" value="1"/>
</dbReference>
<dbReference type="SMART" id="SM00028">
    <property type="entry name" value="TPR"/>
    <property type="match status" value="3"/>
</dbReference>
<dbReference type="SUPFAM" id="SSF48452">
    <property type="entry name" value="TPR-like"/>
    <property type="match status" value="1"/>
</dbReference>
<dbReference type="PROSITE" id="PS50005">
    <property type="entry name" value="TPR"/>
    <property type="match status" value="3"/>
</dbReference>
<dbReference type="PROSITE" id="PS50293">
    <property type="entry name" value="TPR_REGION"/>
    <property type="match status" value="1"/>
</dbReference>
<comment type="function">
    <text evidence="1">One HIP oligomer binds the ATPase domains of at least two HSC70 molecules dependent on activation of the HSC70 ATPase by HSP40. Stabilizes the ADP state of HSC70 that has a high affinity for substrate protein. Through its own chaperone activity, it may contribute to the interaction of HSC70 with various target proteins (By similarity).</text>
</comment>
<comment type="subunit">
    <text evidence="1 4">Homotetramer. Interacts with HSC70 as well as DNAJ homologs and HSP90 (By similarity). Interacts (via the C-terminus 303- 319 AA) with GRK5.</text>
</comment>
<comment type="interaction">
    <interactant intactId="EBI-357285">
        <id>P50502</id>
    </interactant>
    <interactant intactId="EBI-1222467">
        <id>P02649</id>
        <label>APOE</label>
    </interactant>
    <organismsDiffer>false</organismsDiffer>
    <experiments>3</experiments>
</comment>
<comment type="interaction">
    <interactant intactId="EBI-357285">
        <id>P50502</id>
    </interactant>
    <interactant intactId="EBI-12300031">
        <id>Q9NNX6-10</id>
        <label>CD209</label>
    </interactant>
    <organismsDiffer>false</organismsDiffer>
    <experiments>3</experiments>
</comment>
<comment type="interaction">
    <interactant intactId="EBI-357285">
        <id>P50502</id>
    </interactant>
    <interactant intactId="EBI-466029">
        <id>P42858</id>
        <label>HTT</label>
    </interactant>
    <organismsDiffer>false</organismsDiffer>
    <experiments>13</experiments>
</comment>
<comment type="interaction">
    <interactant intactId="EBI-357285">
        <id>P50502</id>
    </interactant>
    <interactant intactId="EBI-1391623">
        <id>P29474</id>
        <label>NOS3</label>
    </interactant>
    <organismsDiffer>false</organismsDiffer>
    <experiments>3</experiments>
</comment>
<comment type="interaction">
    <interactant intactId="EBI-357285">
        <id>P50502</id>
    </interactant>
    <interactant intactId="EBI-297277">
        <id>P49768</id>
        <label>PSEN1</label>
    </interactant>
    <organismsDiffer>false</organismsDiffer>
    <experiments>3</experiments>
</comment>
<comment type="subcellular location">
    <subcellularLocation>
        <location evidence="1">Cytoplasm</location>
    </subcellularLocation>
</comment>
<comment type="similarity">
    <text evidence="5">Belongs to the FAM10 family.</text>
</comment>
<accession>P50502</accession>
<accession>O14999</accession>
<accession>Q2TU77</accession>
<sequence length="369" mass="41332">MDPRKVNELRAFVKMCKQDPSVLHTEEMRFLREWVESMGGKVPPATQKAKSEENTKEEKPDSKKVEEDLKADEPSSEESDLEIDKEGVIEPDTDAPQEMGDENAEITEEMMDQANDKKVAAIEALNDGELQKAIDLFTDAIKLNPRLAILYAKRASVFVKLQKPNAAIRDCDRAIEINPDSAQPYKWRGKAHRLLGHWEEAAHDLALACKLDYDEDASAMLKEVQPRAQKIAEHRRKYERKREEREIKERIERVKKAREEHERAQREEEARRQSGAQYGSFPGGFPGGMPGNFPGGMPGMGGGMPGMAGMPGLNEILSDPEVLAAMQDPEVMVAFQDVAQNPANMSKYQSNPKVMNLISKLSAKFGGQA</sequence>
<reference key="1">
    <citation type="journal article" date="1996" name="Mol. Endocrinol.">
        <title>Molecular cloning of human p48, a transient component of progesterone receptor complexes and an Hsp70-binding protein.</title>
        <authorList>
            <person name="Prapapanich V."/>
            <person name="Chen S."/>
            <person name="Nair S.C."/>
            <person name="Rimerman R.A."/>
            <person name="Smith D.F."/>
        </authorList>
    </citation>
    <scope>NUCLEOTIDE SEQUENCE [MRNA]</scope>
    <scope>PARTIAL PROTEIN SEQUENCE</scope>
</reference>
<reference key="2">
    <citation type="journal article" date="1996" name="Zhonghua Zhong Liu Za Zhi">
        <title>Differential expression of HSU17714 gene in colorectal cancer and normal colonic mucosa.</title>
        <authorList>
            <person name="Mo Y."/>
            <person name="Zheng S."/>
            <person name="Shen D."/>
        </authorList>
    </citation>
    <scope>NUCLEOTIDE SEQUENCE [MRNA]</scope>
    <source>
        <tissue>Colon mucosa</tissue>
    </source>
</reference>
<reference key="3">
    <citation type="journal article" date="1997" name="J. Cancer Res. Clin. Oncol.">
        <title>Characterization of colorectal-cancer-related cDNA clones obtained by subtractive hybridization screening.</title>
        <authorList>
            <person name="Cao J."/>
            <person name="Cai X."/>
            <person name="Zheng L."/>
            <person name="Geng L."/>
            <person name="Shi Z."/>
            <person name="Pao C.C."/>
            <person name="Zheng S."/>
        </authorList>
    </citation>
    <scope>NUCLEOTIDE SEQUENCE [MRNA]</scope>
    <source>
        <tissue>Colon mucosa</tissue>
    </source>
</reference>
<reference key="4">
    <citation type="submission" date="2003-12" db="EMBL/GenBank/DDBJ databases">
        <title>Identification of human aging-associated gene.</title>
        <authorList>
            <person name="Kim J.W."/>
        </authorList>
    </citation>
    <scope>NUCLEOTIDE SEQUENCE [MRNA]</scope>
</reference>
<reference key="5">
    <citation type="journal article" date="2004" name="Genome Biol.">
        <title>A genome annotation-driven approach to cloning the human ORFeome.</title>
        <authorList>
            <person name="Collins J.E."/>
            <person name="Wright C.L."/>
            <person name="Edwards C.A."/>
            <person name="Davis M.P."/>
            <person name="Grinham J.A."/>
            <person name="Cole C.G."/>
            <person name="Goward M.E."/>
            <person name="Aguado B."/>
            <person name="Mallya M."/>
            <person name="Mokrab Y."/>
            <person name="Huckle E.J."/>
            <person name="Beare D.M."/>
            <person name="Dunham I."/>
        </authorList>
    </citation>
    <scope>NUCLEOTIDE SEQUENCE [LARGE SCALE MRNA]</scope>
</reference>
<reference key="6">
    <citation type="journal article" date="1999" name="Nature">
        <title>The DNA sequence of human chromosome 22.</title>
        <authorList>
            <person name="Dunham I."/>
            <person name="Hunt A.R."/>
            <person name="Collins J.E."/>
            <person name="Bruskiewich R."/>
            <person name="Beare D.M."/>
            <person name="Clamp M."/>
            <person name="Smink L.J."/>
            <person name="Ainscough R."/>
            <person name="Almeida J.P."/>
            <person name="Babbage A.K."/>
            <person name="Bagguley C."/>
            <person name="Bailey J."/>
            <person name="Barlow K.F."/>
            <person name="Bates K.N."/>
            <person name="Beasley O.P."/>
            <person name="Bird C.P."/>
            <person name="Blakey S.E."/>
            <person name="Bridgeman A.M."/>
            <person name="Buck D."/>
            <person name="Burgess J."/>
            <person name="Burrill W.D."/>
            <person name="Burton J."/>
            <person name="Carder C."/>
            <person name="Carter N.P."/>
            <person name="Chen Y."/>
            <person name="Clark G."/>
            <person name="Clegg S.M."/>
            <person name="Cobley V.E."/>
            <person name="Cole C.G."/>
            <person name="Collier R.E."/>
            <person name="Connor R."/>
            <person name="Conroy D."/>
            <person name="Corby N.R."/>
            <person name="Coville G.J."/>
            <person name="Cox A.V."/>
            <person name="Davis J."/>
            <person name="Dawson E."/>
            <person name="Dhami P.D."/>
            <person name="Dockree C."/>
            <person name="Dodsworth S.J."/>
            <person name="Durbin R.M."/>
            <person name="Ellington A.G."/>
            <person name="Evans K.L."/>
            <person name="Fey J.M."/>
            <person name="Fleming K."/>
            <person name="French L."/>
            <person name="Garner A.A."/>
            <person name="Gilbert J.G.R."/>
            <person name="Goward M.E."/>
            <person name="Grafham D.V."/>
            <person name="Griffiths M.N.D."/>
            <person name="Hall C."/>
            <person name="Hall R.E."/>
            <person name="Hall-Tamlyn G."/>
            <person name="Heathcott R.W."/>
            <person name="Ho S."/>
            <person name="Holmes S."/>
            <person name="Hunt S.E."/>
            <person name="Jones M.C."/>
            <person name="Kershaw J."/>
            <person name="Kimberley A.M."/>
            <person name="King A."/>
            <person name="Laird G.K."/>
            <person name="Langford C.F."/>
            <person name="Leversha M.A."/>
            <person name="Lloyd C."/>
            <person name="Lloyd D.M."/>
            <person name="Martyn I.D."/>
            <person name="Mashreghi-Mohammadi M."/>
            <person name="Matthews L.H."/>
            <person name="Mccann O.T."/>
            <person name="Mcclay J."/>
            <person name="Mclaren S."/>
            <person name="McMurray A.A."/>
            <person name="Milne S.A."/>
            <person name="Mortimore B.J."/>
            <person name="Odell C.N."/>
            <person name="Pavitt R."/>
            <person name="Pearce A.V."/>
            <person name="Pearson D."/>
            <person name="Phillimore B.J.C.T."/>
            <person name="Phillips S.H."/>
            <person name="Plumb R.W."/>
            <person name="Ramsay H."/>
            <person name="Ramsey Y."/>
            <person name="Rogers L."/>
            <person name="Ross M.T."/>
            <person name="Scott C.E."/>
            <person name="Sehra H.K."/>
            <person name="Skuce C.D."/>
            <person name="Smalley S."/>
            <person name="Smith M.L."/>
            <person name="Soderlund C."/>
            <person name="Spragon L."/>
            <person name="Steward C.A."/>
            <person name="Sulston J.E."/>
            <person name="Swann R.M."/>
            <person name="Vaudin M."/>
            <person name="Wall M."/>
            <person name="Wallis J.M."/>
            <person name="Whiteley M.N."/>
            <person name="Willey D.L."/>
            <person name="Williams L."/>
            <person name="Williams S.A."/>
            <person name="Williamson H."/>
            <person name="Wilmer T.E."/>
            <person name="Wilming L."/>
            <person name="Wright C.L."/>
            <person name="Hubbard T."/>
            <person name="Bentley D.R."/>
            <person name="Beck S."/>
            <person name="Rogers J."/>
            <person name="Shimizu N."/>
            <person name="Minoshima S."/>
            <person name="Kawasaki K."/>
            <person name="Sasaki T."/>
            <person name="Asakawa S."/>
            <person name="Kudoh J."/>
            <person name="Shintani A."/>
            <person name="Shibuya K."/>
            <person name="Yoshizaki Y."/>
            <person name="Aoki N."/>
            <person name="Mitsuyama S."/>
            <person name="Roe B.A."/>
            <person name="Chen F."/>
            <person name="Chu L."/>
            <person name="Crabtree J."/>
            <person name="Deschamps S."/>
            <person name="Do A."/>
            <person name="Do T."/>
            <person name="Dorman A."/>
            <person name="Fang F."/>
            <person name="Fu Y."/>
            <person name="Hu P."/>
            <person name="Hua A."/>
            <person name="Kenton S."/>
            <person name="Lai H."/>
            <person name="Lao H.I."/>
            <person name="Lewis J."/>
            <person name="Lewis S."/>
            <person name="Lin S.-P."/>
            <person name="Loh P."/>
            <person name="Malaj E."/>
            <person name="Nguyen T."/>
            <person name="Pan H."/>
            <person name="Phan S."/>
            <person name="Qi S."/>
            <person name="Qian Y."/>
            <person name="Ray L."/>
            <person name="Ren Q."/>
            <person name="Shaull S."/>
            <person name="Sloan D."/>
            <person name="Song L."/>
            <person name="Wang Q."/>
            <person name="Wang Y."/>
            <person name="Wang Z."/>
            <person name="White J."/>
            <person name="Willingham D."/>
            <person name="Wu H."/>
            <person name="Yao Z."/>
            <person name="Zhan M."/>
            <person name="Zhang G."/>
            <person name="Chissoe S."/>
            <person name="Murray J."/>
            <person name="Miller N."/>
            <person name="Minx P."/>
            <person name="Fulton R."/>
            <person name="Johnson D."/>
            <person name="Bemis G."/>
            <person name="Bentley D."/>
            <person name="Bradshaw H."/>
            <person name="Bourne S."/>
            <person name="Cordes M."/>
            <person name="Du Z."/>
            <person name="Fulton L."/>
            <person name="Goela D."/>
            <person name="Graves T."/>
            <person name="Hawkins J."/>
            <person name="Hinds K."/>
            <person name="Kemp K."/>
            <person name="Latreille P."/>
            <person name="Layman D."/>
            <person name="Ozersky P."/>
            <person name="Rohlfing T."/>
            <person name="Scheet P."/>
            <person name="Walker C."/>
            <person name="Wamsley A."/>
            <person name="Wohldmann P."/>
            <person name="Pepin K."/>
            <person name="Nelson J."/>
            <person name="Korf I."/>
            <person name="Bedell J.A."/>
            <person name="Hillier L.W."/>
            <person name="Mardis E."/>
            <person name="Waterston R."/>
            <person name="Wilson R."/>
            <person name="Emanuel B.S."/>
            <person name="Shaikh T."/>
            <person name="Kurahashi H."/>
            <person name="Saitta S."/>
            <person name="Budarf M.L."/>
            <person name="McDermid H.E."/>
            <person name="Johnson A."/>
            <person name="Wong A.C.C."/>
            <person name="Morrow B.E."/>
            <person name="Edelmann L."/>
            <person name="Kim U.J."/>
            <person name="Shizuya H."/>
            <person name="Simon M.I."/>
            <person name="Dumanski J.P."/>
            <person name="Peyrard M."/>
            <person name="Kedra D."/>
            <person name="Seroussi E."/>
            <person name="Fransson I."/>
            <person name="Tapia I."/>
            <person name="Bruder C.E."/>
            <person name="O'Brien K.P."/>
            <person name="Wilkinson P."/>
            <person name="Bodenteich A."/>
            <person name="Hartman K."/>
            <person name="Hu X."/>
            <person name="Khan A.S."/>
            <person name="Lane L."/>
            <person name="Tilahun Y."/>
            <person name="Wright H."/>
        </authorList>
    </citation>
    <scope>NUCLEOTIDE SEQUENCE [LARGE SCALE GENOMIC DNA]</scope>
</reference>
<reference key="7">
    <citation type="submission" date="2005-07" db="EMBL/GenBank/DDBJ databases">
        <authorList>
            <person name="Mural R.J."/>
            <person name="Istrail S."/>
            <person name="Sutton G.G."/>
            <person name="Florea L."/>
            <person name="Halpern A.L."/>
            <person name="Mobarry C.M."/>
            <person name="Lippert R."/>
            <person name="Walenz B."/>
            <person name="Shatkay H."/>
            <person name="Dew I."/>
            <person name="Miller J.R."/>
            <person name="Flanigan M.J."/>
            <person name="Edwards N.J."/>
            <person name="Bolanos R."/>
            <person name="Fasulo D."/>
            <person name="Halldorsson B.V."/>
            <person name="Hannenhalli S."/>
            <person name="Turner R."/>
            <person name="Yooseph S."/>
            <person name="Lu F."/>
            <person name="Nusskern D.R."/>
            <person name="Shue B.C."/>
            <person name="Zheng X.H."/>
            <person name="Zhong F."/>
            <person name="Delcher A.L."/>
            <person name="Huson D.H."/>
            <person name="Kravitz S.A."/>
            <person name="Mouchard L."/>
            <person name="Reinert K."/>
            <person name="Remington K.A."/>
            <person name="Clark A.G."/>
            <person name="Waterman M.S."/>
            <person name="Eichler E.E."/>
            <person name="Adams M.D."/>
            <person name="Hunkapiller M.W."/>
            <person name="Myers E.W."/>
            <person name="Venter J.C."/>
        </authorList>
    </citation>
    <scope>NUCLEOTIDE SEQUENCE [LARGE SCALE GENOMIC DNA]</scope>
</reference>
<reference key="8">
    <citation type="journal article" date="2004" name="Genome Res.">
        <title>The status, quality, and expansion of the NIH full-length cDNA project: the Mammalian Gene Collection (MGC).</title>
        <authorList>
            <consortium name="The MGC Project Team"/>
        </authorList>
    </citation>
    <scope>NUCLEOTIDE SEQUENCE [LARGE SCALE MRNA]</scope>
    <source>
        <tissue>Skin</tissue>
        <tissue>Testis</tissue>
    </source>
</reference>
<reference key="9">
    <citation type="submission" date="2008-12" db="UniProtKB">
        <authorList>
            <person name="Lubec G."/>
            <person name="Chen W.-Q."/>
            <person name="Sun Y."/>
        </authorList>
    </citation>
    <scope>PROTEIN SEQUENCE OF 119-142; 147-153; 174-186 AND 211-222</scope>
    <scope>IDENTIFICATION BY MASS SPECTROMETRY</scope>
    <source>
        <tissue>Fetal brain cortex</tissue>
    </source>
</reference>
<reference key="10">
    <citation type="journal article" date="1999" name="Int. J. Cancer">
        <title>Antigens recognized by autologous antibody in patients with renal-cell carcinoma.</title>
        <authorList>
            <person name="Scanlan M.J."/>
            <person name="Gordan J.D."/>
            <person name="Williamson B."/>
            <person name="Stockert E."/>
            <person name="Bander N.H."/>
            <person name="Jongeneel C.V."/>
            <person name="Gure A.O."/>
            <person name="Jaeger D."/>
            <person name="Jaeger E."/>
            <person name="Knuth A."/>
            <person name="Chen Y.-T."/>
            <person name="Old L.J."/>
        </authorList>
    </citation>
    <scope>IDENTIFICATION AS A RENAL CANCER ANTIGEN</scope>
    <source>
        <tissue>Renal cell carcinoma</tissue>
    </source>
</reference>
<reference key="11">
    <citation type="journal article" date="2010" name="Sci. Signal.">
        <title>Quantitative phosphoproteomics reveals widespread full phosphorylation site occupancy during mitosis.</title>
        <authorList>
            <person name="Olsen J.V."/>
            <person name="Vermeulen M."/>
            <person name="Santamaria A."/>
            <person name="Kumar C."/>
            <person name="Miller M.L."/>
            <person name="Jensen L.J."/>
            <person name="Gnad F."/>
            <person name="Cox J."/>
            <person name="Jensen T.S."/>
            <person name="Nigg E.A."/>
            <person name="Brunak S."/>
            <person name="Mann M."/>
        </authorList>
    </citation>
    <scope>IDENTIFICATION BY MASS SPECTROMETRY [LARGE SCALE ANALYSIS]</scope>
    <source>
        <tissue>Cervix carcinoma</tissue>
    </source>
</reference>
<reference key="12">
    <citation type="journal article" date="2011" name="Biochemistry">
        <title>G protein-coupled receptor kinase 5 phosphorylation of Hip regulates internalization of the chemokine receptor CXCR4.</title>
        <authorList>
            <person name="Barker B.L."/>
            <person name="Benovic J.L."/>
        </authorList>
    </citation>
    <scope>PHOSPHORYLATION AT SER-346</scope>
    <scope>INTERACTION WITH GRK5</scope>
</reference>
<reference key="13">
    <citation type="journal article" date="2014" name="J. Proteomics">
        <title>An enzyme assisted RP-RPLC approach for in-depth analysis of human liver phosphoproteome.</title>
        <authorList>
            <person name="Bian Y."/>
            <person name="Song C."/>
            <person name="Cheng K."/>
            <person name="Dong M."/>
            <person name="Wang F."/>
            <person name="Huang J."/>
            <person name="Sun D."/>
            <person name="Wang L."/>
            <person name="Ye M."/>
            <person name="Zou H."/>
        </authorList>
    </citation>
    <scope>IDENTIFICATION BY MASS SPECTROMETRY [LARGE SCALE ANALYSIS]</scope>
    <source>
        <tissue>Liver</tissue>
    </source>
</reference>
<proteinExistence type="evidence at protein level"/>
<keyword id="KW-0007">Acetylation</keyword>
<keyword id="KW-0143">Chaperone</keyword>
<keyword id="KW-0963">Cytoplasm</keyword>
<keyword id="KW-0903">Direct protein sequencing</keyword>
<keyword id="KW-0597">Phosphoprotein</keyword>
<keyword id="KW-1267">Proteomics identification</keyword>
<keyword id="KW-1185">Reference proteome</keyword>
<keyword id="KW-0677">Repeat</keyword>
<keyword id="KW-0802">TPR repeat</keyword>
<organism>
    <name type="scientific">Homo sapiens</name>
    <name type="common">Human</name>
    <dbReference type="NCBI Taxonomy" id="9606"/>
    <lineage>
        <taxon>Eukaryota</taxon>
        <taxon>Metazoa</taxon>
        <taxon>Chordata</taxon>
        <taxon>Craniata</taxon>
        <taxon>Vertebrata</taxon>
        <taxon>Euteleostomi</taxon>
        <taxon>Mammalia</taxon>
        <taxon>Eutheria</taxon>
        <taxon>Euarchontoglires</taxon>
        <taxon>Primates</taxon>
        <taxon>Haplorrhini</taxon>
        <taxon>Catarrhini</taxon>
        <taxon>Hominidae</taxon>
        <taxon>Homo</taxon>
    </lineage>
</organism>
<feature type="chain" id="PRO_0000190811" description="Hsc70-interacting protein">
    <location>
        <begin position="1"/>
        <end position="369"/>
    </location>
</feature>
<feature type="repeat" description="TPR 1">
    <location>
        <begin position="114"/>
        <end position="147"/>
    </location>
</feature>
<feature type="repeat" description="TPR 2">
    <location>
        <begin position="148"/>
        <end position="181"/>
    </location>
</feature>
<feature type="repeat" description="TPR 3">
    <location>
        <begin position="182"/>
        <end position="215"/>
    </location>
</feature>
<feature type="domain" description="STI1">
    <location>
        <begin position="319"/>
        <end position="358"/>
    </location>
</feature>
<feature type="region of interest" description="Disordered" evidence="3">
    <location>
        <begin position="38"/>
        <end position="97"/>
    </location>
</feature>
<feature type="region of interest" description="Disordered" evidence="3">
    <location>
        <begin position="256"/>
        <end position="300"/>
    </location>
</feature>
<feature type="compositionally biased region" description="Basic and acidic residues" evidence="3">
    <location>
        <begin position="49"/>
        <end position="73"/>
    </location>
</feature>
<feature type="compositionally biased region" description="Basic and acidic residues" evidence="3">
    <location>
        <begin position="256"/>
        <end position="272"/>
    </location>
</feature>
<feature type="compositionally biased region" description="Gly residues" evidence="3">
    <location>
        <begin position="281"/>
        <end position="300"/>
    </location>
</feature>
<feature type="modified residue" description="Phosphoserine; by GRK5" evidence="4">
    <location>
        <position position="346"/>
    </location>
</feature>
<feature type="modified residue" description="N6-acetyllysine" evidence="2">
    <location>
        <position position="353"/>
    </location>
</feature>
<feature type="modified residue" description="N6-acetyllysine" evidence="2">
    <location>
        <position position="360"/>
    </location>
</feature>
<feature type="sequence variant" id="VAR_011900" description="In dbSNP:rs710193.">
    <original>M</original>
    <variation>I</variation>
    <location>
        <position position="297"/>
    </location>
</feature>
<feature type="sequence conflict" description="In Ref. 1; AAB38382." evidence="5" ref="1">
    <original>H</original>
    <variation>Y</variation>
    <location>
        <position position="24"/>
    </location>
</feature>
<feature type="sequence conflict" description="In Ref. 1; AAB38382." evidence="5" ref="1">
    <original>M</original>
    <variation>I</variation>
    <location>
        <position position="38"/>
    </location>
</feature>
<feature type="sequence conflict" description="In Ref. 1; AAB38382." evidence="5" ref="1">
    <original>K</original>
    <variation>I</variation>
    <location>
        <position position="50"/>
    </location>
</feature>
<evidence type="ECO:0000250" key="1"/>
<evidence type="ECO:0000250" key="2">
    <source>
        <dbReference type="UniProtKB" id="Q99L47"/>
    </source>
</evidence>
<evidence type="ECO:0000256" key="3">
    <source>
        <dbReference type="SAM" id="MobiDB-lite"/>
    </source>
</evidence>
<evidence type="ECO:0000269" key="4">
    <source>
    </source>
</evidence>
<evidence type="ECO:0000305" key="5"/>